<proteinExistence type="evidence at protein level"/>
<name>SP0B_BACSU</name>
<organism>
    <name type="scientific">Bacillus subtilis (strain 168)</name>
    <dbReference type="NCBI Taxonomy" id="224308"/>
    <lineage>
        <taxon>Bacteria</taxon>
        <taxon>Bacillati</taxon>
        <taxon>Bacillota</taxon>
        <taxon>Bacilli</taxon>
        <taxon>Bacillales</taxon>
        <taxon>Bacillaceae</taxon>
        <taxon>Bacillus</taxon>
    </lineage>
</organism>
<sequence length="192" mass="22543">MKDVSKNQEENISDTALTNELIHLLGHSRHDWMNKLQLIKGNLSLQKYDRVFEMIEEMVIDAKHESKLSNLKTPHLAFDFLTFNWKTHYMTLEYEVLGEIKDLSAYDQKLAKLMRKLFHLFDQAVSRESENHLTVSLQTDHPDRQLILYLDFHGAFADPSAFDDIRQNGYEDVDIMRFEITSHECLIEIGLD</sequence>
<comment type="function">
    <text>Key element in the phosphorelay regulating sporulation initiation. Acts on spo0A. Mediates reversible phosphoryl transfer from spo0F to spo0A.</text>
</comment>
<comment type="subunit">
    <text>Homodimer. Dimerization is essential for activity as both monomers contribute to the formation of the active site.</text>
</comment>
<comment type="subcellular location">
    <subcellularLocation>
        <location>Cytoplasm</location>
    </subcellularLocation>
</comment>
<comment type="developmental stage">
    <text>Expressed during sporulation.</text>
</comment>
<comment type="PTM">
    <text evidence="1">Phosphorylated by spo0F.</text>
</comment>
<reference key="1">
    <citation type="journal article" date="1985" name="J. Bacteriol.">
        <title>Sequence analysis of the spo0B locus reveals a polycistronic transcription unit.</title>
        <authorList>
            <person name="Ferrari F.A."/>
            <person name="Trach K.A."/>
            <person name="Hoch J.A."/>
        </authorList>
    </citation>
    <scope>NUCLEOTIDE SEQUENCE [GENOMIC DNA]</scope>
</reference>
<reference key="2">
    <citation type="journal article" date="1989" name="J. Bacteriol.">
        <title>The Bacillus subtilis spo0B stage 0 sporulation operon encodes an essential GTP-binding protein.</title>
        <authorList>
            <person name="Trach K."/>
            <person name="Hoch J.A."/>
        </authorList>
    </citation>
    <scope>NUCLEOTIDE SEQUENCE [GENOMIC DNA]</scope>
</reference>
<reference key="3">
    <citation type="journal article" date="1984" name="Proc. Natl. Acad. Sci. U.S.A.">
        <title>Nucleotide sequence of the spo0B gene of Bacillus subtilis and regulation of its expression.</title>
        <authorList>
            <person name="Bouvier J."/>
            <person name="Stragier P."/>
            <person name="Bonamy C."/>
            <person name="Szulmajster J."/>
        </authorList>
    </citation>
    <scope>NUCLEOTIDE SEQUENCE [GENOMIC DNA]</scope>
</reference>
<reference key="4">
    <citation type="journal article" date="1997" name="Nature">
        <title>The complete genome sequence of the Gram-positive bacterium Bacillus subtilis.</title>
        <authorList>
            <person name="Kunst F."/>
            <person name="Ogasawara N."/>
            <person name="Moszer I."/>
            <person name="Albertini A.M."/>
            <person name="Alloni G."/>
            <person name="Azevedo V."/>
            <person name="Bertero M.G."/>
            <person name="Bessieres P."/>
            <person name="Bolotin A."/>
            <person name="Borchert S."/>
            <person name="Borriss R."/>
            <person name="Boursier L."/>
            <person name="Brans A."/>
            <person name="Braun M."/>
            <person name="Brignell S.C."/>
            <person name="Bron S."/>
            <person name="Brouillet S."/>
            <person name="Bruschi C.V."/>
            <person name="Caldwell B."/>
            <person name="Capuano V."/>
            <person name="Carter N.M."/>
            <person name="Choi S.-K."/>
            <person name="Codani J.-J."/>
            <person name="Connerton I.F."/>
            <person name="Cummings N.J."/>
            <person name="Daniel R.A."/>
            <person name="Denizot F."/>
            <person name="Devine K.M."/>
            <person name="Duesterhoeft A."/>
            <person name="Ehrlich S.D."/>
            <person name="Emmerson P.T."/>
            <person name="Entian K.-D."/>
            <person name="Errington J."/>
            <person name="Fabret C."/>
            <person name="Ferrari E."/>
            <person name="Foulger D."/>
            <person name="Fritz C."/>
            <person name="Fujita M."/>
            <person name="Fujita Y."/>
            <person name="Fuma S."/>
            <person name="Galizzi A."/>
            <person name="Galleron N."/>
            <person name="Ghim S.-Y."/>
            <person name="Glaser P."/>
            <person name="Goffeau A."/>
            <person name="Golightly E.J."/>
            <person name="Grandi G."/>
            <person name="Guiseppi G."/>
            <person name="Guy B.J."/>
            <person name="Haga K."/>
            <person name="Haiech J."/>
            <person name="Harwood C.R."/>
            <person name="Henaut A."/>
            <person name="Hilbert H."/>
            <person name="Holsappel S."/>
            <person name="Hosono S."/>
            <person name="Hullo M.-F."/>
            <person name="Itaya M."/>
            <person name="Jones L.-M."/>
            <person name="Joris B."/>
            <person name="Karamata D."/>
            <person name="Kasahara Y."/>
            <person name="Klaerr-Blanchard M."/>
            <person name="Klein C."/>
            <person name="Kobayashi Y."/>
            <person name="Koetter P."/>
            <person name="Koningstein G."/>
            <person name="Krogh S."/>
            <person name="Kumano M."/>
            <person name="Kurita K."/>
            <person name="Lapidus A."/>
            <person name="Lardinois S."/>
            <person name="Lauber J."/>
            <person name="Lazarevic V."/>
            <person name="Lee S.-M."/>
            <person name="Levine A."/>
            <person name="Liu H."/>
            <person name="Masuda S."/>
            <person name="Mauel C."/>
            <person name="Medigue C."/>
            <person name="Medina N."/>
            <person name="Mellado R.P."/>
            <person name="Mizuno M."/>
            <person name="Moestl D."/>
            <person name="Nakai S."/>
            <person name="Noback M."/>
            <person name="Noone D."/>
            <person name="O'Reilly M."/>
            <person name="Ogawa K."/>
            <person name="Ogiwara A."/>
            <person name="Oudega B."/>
            <person name="Park S.-H."/>
            <person name="Parro V."/>
            <person name="Pohl T.M."/>
            <person name="Portetelle D."/>
            <person name="Porwollik S."/>
            <person name="Prescott A.M."/>
            <person name="Presecan E."/>
            <person name="Pujic P."/>
            <person name="Purnelle B."/>
            <person name="Rapoport G."/>
            <person name="Rey M."/>
            <person name="Reynolds S."/>
            <person name="Rieger M."/>
            <person name="Rivolta C."/>
            <person name="Rocha E."/>
            <person name="Roche B."/>
            <person name="Rose M."/>
            <person name="Sadaie Y."/>
            <person name="Sato T."/>
            <person name="Scanlan E."/>
            <person name="Schleich S."/>
            <person name="Schroeter R."/>
            <person name="Scoffone F."/>
            <person name="Sekiguchi J."/>
            <person name="Sekowska A."/>
            <person name="Seror S.J."/>
            <person name="Serror P."/>
            <person name="Shin B.-S."/>
            <person name="Soldo B."/>
            <person name="Sorokin A."/>
            <person name="Tacconi E."/>
            <person name="Takagi T."/>
            <person name="Takahashi H."/>
            <person name="Takemaru K."/>
            <person name="Takeuchi M."/>
            <person name="Tamakoshi A."/>
            <person name="Tanaka T."/>
            <person name="Terpstra P."/>
            <person name="Tognoni A."/>
            <person name="Tosato V."/>
            <person name="Uchiyama S."/>
            <person name="Vandenbol M."/>
            <person name="Vannier F."/>
            <person name="Vassarotti A."/>
            <person name="Viari A."/>
            <person name="Wambutt R."/>
            <person name="Wedler E."/>
            <person name="Wedler H."/>
            <person name="Weitzenegger T."/>
            <person name="Winters P."/>
            <person name="Wipat A."/>
            <person name="Yamamoto H."/>
            <person name="Yamane K."/>
            <person name="Yasumoto K."/>
            <person name="Yata K."/>
            <person name="Yoshida K."/>
            <person name="Yoshikawa H.-F."/>
            <person name="Zumstein E."/>
            <person name="Yoshikawa H."/>
            <person name="Danchin A."/>
        </authorList>
    </citation>
    <scope>NUCLEOTIDE SEQUENCE [LARGE SCALE GENOMIC DNA]</scope>
    <source>
        <strain>168</strain>
    </source>
</reference>
<reference key="5">
    <citation type="journal article" date="1998" name="Mol. Cell">
        <title>Formation of a novel four-helix bundle and molecular recognition sites by dimerization of a response regulator phosphotransferase.</title>
        <authorList>
            <person name="Varughese K.I."/>
            <person name="Madhusudan X."/>
            <person name="Zhou X.Z."/>
            <person name="Whiteley J.M."/>
            <person name="Hoch J.A."/>
        </authorList>
    </citation>
    <scope>X-RAY CRYSTALLOGRAPHY (2.6 ANGSTROMS)</scope>
</reference>
<reference key="6">
    <citation type="journal article" date="2000" name="Structure">
        <title>A transient interaction between two phosphorelay proteins trapped in a crystal lattice reveals the mechanism of molecular recognition and phosphotransfer in signal transduction.</title>
        <authorList>
            <person name="Zapf J."/>
            <person name="Sen U."/>
            <person name="Madhusudan X."/>
            <person name="Hoch J.A."/>
            <person name="Varughese K.I."/>
        </authorList>
    </citation>
    <scope>X-RAY CRYSTALLOGRAPHY (3.0 ANGSTROMS)</scope>
</reference>
<reference key="7">
    <citation type="journal article" date="1998" name="J. Biol. Chem.">
        <title>Phosphorylation of the Spo0B response regulator phosphotransferase of the phosphorelay initiating development in Bacillus subtilis.</title>
        <authorList>
            <person name="Tzeng Y.L."/>
            <person name="Zhou X.Z."/>
            <person name="Hoch J.A."/>
        </authorList>
    </citation>
    <scope>PHOSPHORYLATION AT HIS-30</scope>
    <scope>MUTAGENESIS OF HIS-30</scope>
</reference>
<dbReference type="EC" id="2.7.-.-"/>
<dbReference type="EMBL" id="X02655">
    <property type="protein sequence ID" value="CAA26489.1"/>
    <property type="molecule type" value="Genomic_DNA"/>
</dbReference>
<dbReference type="EMBL" id="M24537">
    <property type="protein sequence ID" value="AAA22504.1"/>
    <property type="molecule type" value="Genomic_DNA"/>
</dbReference>
<dbReference type="EMBL" id="K02664">
    <property type="protein sequence ID" value="AAB05348.1"/>
    <property type="molecule type" value="Genomic_DNA"/>
</dbReference>
<dbReference type="EMBL" id="AL009126">
    <property type="protein sequence ID" value="CAB14753.1"/>
    <property type="molecule type" value="Genomic_DNA"/>
</dbReference>
<dbReference type="PIR" id="A22974">
    <property type="entry name" value="SZBS0B"/>
</dbReference>
<dbReference type="RefSeq" id="NP_390671.1">
    <property type="nucleotide sequence ID" value="NC_000964.3"/>
</dbReference>
<dbReference type="RefSeq" id="WP_004399131.1">
    <property type="nucleotide sequence ID" value="NZ_OZ025638.1"/>
</dbReference>
<dbReference type="PDB" id="1F51">
    <property type="method" value="X-ray"/>
    <property type="resolution" value="3.00 A"/>
    <property type="chains" value="A/B/C/D=11-192"/>
</dbReference>
<dbReference type="PDB" id="1IXM">
    <property type="method" value="X-ray"/>
    <property type="resolution" value="2.60 A"/>
    <property type="chains" value="A/B=1-192"/>
</dbReference>
<dbReference type="PDB" id="2FTK">
    <property type="method" value="X-ray"/>
    <property type="resolution" value="3.05 A"/>
    <property type="chains" value="A/B/C/D=1-192"/>
</dbReference>
<dbReference type="PDBsum" id="1F51"/>
<dbReference type="PDBsum" id="1IXM"/>
<dbReference type="PDBsum" id="2FTK"/>
<dbReference type="SMR" id="P06535"/>
<dbReference type="FunCoup" id="P06535">
    <property type="interactions" value="177"/>
</dbReference>
<dbReference type="STRING" id="224308.BSU27930"/>
<dbReference type="iPTMnet" id="P06535"/>
<dbReference type="PaxDb" id="224308-BSU27930"/>
<dbReference type="EnsemblBacteria" id="CAB14753">
    <property type="protein sequence ID" value="CAB14753"/>
    <property type="gene ID" value="BSU_27930"/>
</dbReference>
<dbReference type="GeneID" id="935956"/>
<dbReference type="KEGG" id="bsu:BSU27930"/>
<dbReference type="PATRIC" id="fig|224308.179.peg.3034"/>
<dbReference type="eggNOG" id="COG3290">
    <property type="taxonomic scope" value="Bacteria"/>
</dbReference>
<dbReference type="InParanoid" id="P06535"/>
<dbReference type="OrthoDB" id="2375606at2"/>
<dbReference type="BioCyc" id="BSUB:BSU27930-MONOMER"/>
<dbReference type="EvolutionaryTrace" id="P06535"/>
<dbReference type="Proteomes" id="UP000001570">
    <property type="component" value="Chromosome"/>
</dbReference>
<dbReference type="GO" id="GO:0005737">
    <property type="term" value="C:cytoplasm"/>
    <property type="evidence" value="ECO:0007669"/>
    <property type="project" value="UniProtKB-SubCell"/>
</dbReference>
<dbReference type="GO" id="GO:0000155">
    <property type="term" value="F:phosphorelay sensor kinase activity"/>
    <property type="evidence" value="ECO:0007669"/>
    <property type="project" value="InterPro"/>
</dbReference>
<dbReference type="GO" id="GO:0030435">
    <property type="term" value="P:sporulation resulting in formation of a cellular spore"/>
    <property type="evidence" value="ECO:0007669"/>
    <property type="project" value="UniProtKB-KW"/>
</dbReference>
<dbReference type="Gene3D" id="1.10.287.130">
    <property type="match status" value="1"/>
</dbReference>
<dbReference type="Gene3D" id="3.30.565.30">
    <property type="entry name" value="Sporulation initiation phosphotransferase B (SpoOB), C-terminal domain"/>
    <property type="match status" value="1"/>
</dbReference>
<dbReference type="InterPro" id="IPR016120">
    <property type="entry name" value="Sig_transdc_His_kin_SpoOB"/>
</dbReference>
<dbReference type="InterPro" id="IPR037100">
    <property type="entry name" value="Spo0B_C_sf"/>
</dbReference>
<dbReference type="InterPro" id="IPR039506">
    <property type="entry name" value="SPOB_a"/>
</dbReference>
<dbReference type="InterPro" id="IPR016122">
    <property type="entry name" value="SpoOB_C"/>
</dbReference>
<dbReference type="Pfam" id="PF14689">
    <property type="entry name" value="SPOB_a"/>
    <property type="match status" value="1"/>
</dbReference>
<dbReference type="Pfam" id="PF14682">
    <property type="entry name" value="SPOB_ab"/>
    <property type="match status" value="1"/>
</dbReference>
<dbReference type="SMART" id="SM01317">
    <property type="entry name" value="SPOB_ab"/>
    <property type="match status" value="1"/>
</dbReference>
<dbReference type="SUPFAM" id="SSF55890">
    <property type="entry name" value="Sporulation response regulatory protein Spo0B"/>
    <property type="match status" value="1"/>
</dbReference>
<accession>P06535</accession>
<gene>
    <name type="primary">spo0B</name>
    <name type="synonym">spo0D</name>
    <name type="ordered locus">BSU27930</name>
</gene>
<evidence type="ECO:0000269" key="1">
    <source>
    </source>
</evidence>
<evidence type="ECO:0007829" key="2">
    <source>
        <dbReference type="PDB" id="1F51"/>
    </source>
</evidence>
<evidence type="ECO:0007829" key="3">
    <source>
        <dbReference type="PDB" id="1IXM"/>
    </source>
</evidence>
<protein>
    <recommendedName>
        <fullName>Sporulation initiation phosphotransferase B</fullName>
        <ecNumber>2.7.-.-</ecNumber>
    </recommendedName>
    <alternativeName>
        <fullName>Stage 0 sporulation protein B</fullName>
    </alternativeName>
    <alternativeName>
        <fullName>Stage 0 sporulation protein D</fullName>
    </alternativeName>
</protein>
<feature type="chain" id="PRO_0000072052" description="Sporulation initiation phosphotransferase B">
    <location>
        <begin position="1"/>
        <end position="192"/>
    </location>
</feature>
<feature type="modified residue" description="Phosphohistidine" evidence="1">
    <location>
        <position position="30"/>
    </location>
</feature>
<feature type="mutagenesis site" description="Loss of sporulation." evidence="1">
    <original>H</original>
    <variation>A</variation>
    <location>
        <position position="30"/>
    </location>
</feature>
<feature type="helix" evidence="3">
    <location>
        <begin position="15"/>
        <end position="44"/>
    </location>
</feature>
<feature type="helix" evidence="3">
    <location>
        <begin position="48"/>
        <end position="69"/>
    </location>
</feature>
<feature type="turn" evidence="3">
    <location>
        <begin position="70"/>
        <end position="72"/>
    </location>
</feature>
<feature type="helix" evidence="3">
    <location>
        <begin position="74"/>
        <end position="82"/>
    </location>
</feature>
<feature type="helix" evidence="3">
    <location>
        <begin position="83"/>
        <end position="85"/>
    </location>
</feature>
<feature type="strand" evidence="3">
    <location>
        <begin position="89"/>
        <end position="99"/>
    </location>
</feature>
<feature type="turn" evidence="3">
    <location>
        <begin position="104"/>
        <end position="106"/>
    </location>
</feature>
<feature type="helix" evidence="3">
    <location>
        <begin position="107"/>
        <end position="124"/>
    </location>
</feature>
<feature type="strand" evidence="2">
    <location>
        <begin position="127"/>
        <end position="129"/>
    </location>
</feature>
<feature type="strand" evidence="3">
    <location>
        <begin position="132"/>
        <end position="138"/>
    </location>
</feature>
<feature type="strand" evidence="3">
    <location>
        <begin position="142"/>
        <end position="154"/>
    </location>
</feature>
<feature type="helix" evidence="3">
    <location>
        <begin position="159"/>
        <end position="161"/>
    </location>
</feature>
<feature type="helix" evidence="2">
    <location>
        <begin position="163"/>
        <end position="166"/>
    </location>
</feature>
<feature type="strand" evidence="3">
    <location>
        <begin position="175"/>
        <end position="180"/>
    </location>
</feature>
<feature type="strand" evidence="3">
    <location>
        <begin position="182"/>
        <end position="191"/>
    </location>
</feature>
<keyword id="KW-0002">3D-structure</keyword>
<keyword id="KW-0963">Cytoplasm</keyword>
<keyword id="KW-0418">Kinase</keyword>
<keyword id="KW-0597">Phosphoprotein</keyword>
<keyword id="KW-1185">Reference proteome</keyword>
<keyword id="KW-0716">Sensory transduction</keyword>
<keyword id="KW-0749">Sporulation</keyword>
<keyword id="KW-0808">Transferase</keyword>